<keyword id="KW-0274">FAD</keyword>
<keyword id="KW-0285">Flavoprotein</keyword>
<keyword id="KW-0560">Oxidoreductase</keyword>
<comment type="function">
    <text evidence="1">Oxidative deamination of D-amino acids.</text>
</comment>
<comment type="catalytic activity">
    <reaction evidence="1">
        <text>a D-alpha-amino acid + A + H2O = a 2-oxocarboxylate + AH2 + NH4(+)</text>
        <dbReference type="Rhea" id="RHEA:18125"/>
        <dbReference type="ChEBI" id="CHEBI:13193"/>
        <dbReference type="ChEBI" id="CHEBI:15377"/>
        <dbReference type="ChEBI" id="CHEBI:17499"/>
        <dbReference type="ChEBI" id="CHEBI:28938"/>
        <dbReference type="ChEBI" id="CHEBI:35179"/>
        <dbReference type="ChEBI" id="CHEBI:59871"/>
    </reaction>
</comment>
<comment type="cofactor">
    <cofactor evidence="1">
        <name>FAD</name>
        <dbReference type="ChEBI" id="CHEBI:57692"/>
    </cofactor>
</comment>
<comment type="pathway">
    <text>Amino-acid degradation; D-alanine degradation; NH(3) and pyruvate from D-alanine: step 1/1.</text>
</comment>
<comment type="similarity">
    <text evidence="1">Belongs to the DadA oxidoreductase family.</text>
</comment>
<accession>Q1I2V6</accession>
<proteinExistence type="inferred from homology"/>
<feature type="chain" id="PRO_1000066105" description="D-amino acid dehydrogenase">
    <location>
        <begin position="1"/>
        <end position="434"/>
    </location>
</feature>
<feature type="binding site" evidence="1">
    <location>
        <begin position="3"/>
        <end position="17"/>
    </location>
    <ligand>
        <name>FAD</name>
        <dbReference type="ChEBI" id="CHEBI:57692"/>
    </ligand>
</feature>
<reference key="1">
    <citation type="journal article" date="2006" name="Nat. Biotechnol.">
        <title>Complete genome sequence of the entomopathogenic and metabolically versatile soil bacterium Pseudomonas entomophila.</title>
        <authorList>
            <person name="Vodovar N."/>
            <person name="Vallenet D."/>
            <person name="Cruveiller S."/>
            <person name="Rouy Z."/>
            <person name="Barbe V."/>
            <person name="Acosta C."/>
            <person name="Cattolico L."/>
            <person name="Jubin C."/>
            <person name="Lajus A."/>
            <person name="Segurens B."/>
            <person name="Vacherie B."/>
            <person name="Wincker P."/>
            <person name="Weissenbach J."/>
            <person name="Lemaitre B."/>
            <person name="Medigue C."/>
            <person name="Boccard F."/>
        </authorList>
    </citation>
    <scope>NUCLEOTIDE SEQUENCE [LARGE SCALE GENOMIC DNA]</scope>
    <source>
        <strain>L48</strain>
    </source>
</reference>
<organism>
    <name type="scientific">Pseudomonas entomophila (strain L48)</name>
    <dbReference type="NCBI Taxonomy" id="384676"/>
    <lineage>
        <taxon>Bacteria</taxon>
        <taxon>Pseudomonadati</taxon>
        <taxon>Pseudomonadota</taxon>
        <taxon>Gammaproteobacteria</taxon>
        <taxon>Pseudomonadales</taxon>
        <taxon>Pseudomonadaceae</taxon>
        <taxon>Pseudomonas</taxon>
    </lineage>
</organism>
<name>DADA_PSEE4</name>
<dbReference type="EC" id="1.4.99.-" evidence="1"/>
<dbReference type="EMBL" id="CT573326">
    <property type="protein sequence ID" value="CAK18030.1"/>
    <property type="molecule type" value="Genomic_DNA"/>
</dbReference>
<dbReference type="RefSeq" id="WP_011536386.1">
    <property type="nucleotide sequence ID" value="NC_008027.1"/>
</dbReference>
<dbReference type="SMR" id="Q1I2V6"/>
<dbReference type="STRING" id="384676.PSEEN5416"/>
<dbReference type="GeneID" id="32808324"/>
<dbReference type="KEGG" id="pen:PSEEN5416"/>
<dbReference type="eggNOG" id="COG0665">
    <property type="taxonomic scope" value="Bacteria"/>
</dbReference>
<dbReference type="HOGENOM" id="CLU_007884_9_2_6"/>
<dbReference type="OrthoDB" id="9805337at2"/>
<dbReference type="UniPathway" id="UPA00043">
    <property type="reaction ID" value="UER00498"/>
</dbReference>
<dbReference type="Proteomes" id="UP000000658">
    <property type="component" value="Chromosome"/>
</dbReference>
<dbReference type="GO" id="GO:0005737">
    <property type="term" value="C:cytoplasm"/>
    <property type="evidence" value="ECO:0007669"/>
    <property type="project" value="TreeGrafter"/>
</dbReference>
<dbReference type="GO" id="GO:0005886">
    <property type="term" value="C:plasma membrane"/>
    <property type="evidence" value="ECO:0007669"/>
    <property type="project" value="TreeGrafter"/>
</dbReference>
<dbReference type="GO" id="GO:0008718">
    <property type="term" value="F:D-amino-acid dehydrogenase activity"/>
    <property type="evidence" value="ECO:0007669"/>
    <property type="project" value="UniProtKB-UniRule"/>
</dbReference>
<dbReference type="GO" id="GO:0055130">
    <property type="term" value="P:D-alanine catabolic process"/>
    <property type="evidence" value="ECO:0007669"/>
    <property type="project" value="UniProtKB-UniPathway"/>
</dbReference>
<dbReference type="FunFam" id="3.50.50.60:FF:000020">
    <property type="entry name" value="D-amino acid dehydrogenase"/>
    <property type="match status" value="1"/>
</dbReference>
<dbReference type="Gene3D" id="3.30.9.10">
    <property type="entry name" value="D-Amino Acid Oxidase, subunit A, domain 2"/>
    <property type="match status" value="1"/>
</dbReference>
<dbReference type="Gene3D" id="3.50.50.60">
    <property type="entry name" value="FAD/NAD(P)-binding domain"/>
    <property type="match status" value="2"/>
</dbReference>
<dbReference type="HAMAP" id="MF_01202">
    <property type="entry name" value="DadA"/>
    <property type="match status" value="1"/>
</dbReference>
<dbReference type="InterPro" id="IPR023080">
    <property type="entry name" value="DadA"/>
</dbReference>
<dbReference type="InterPro" id="IPR006076">
    <property type="entry name" value="FAD-dep_OxRdtase"/>
</dbReference>
<dbReference type="InterPro" id="IPR036188">
    <property type="entry name" value="FAD/NAD-bd_sf"/>
</dbReference>
<dbReference type="NCBIfam" id="NF001933">
    <property type="entry name" value="PRK00711.1"/>
    <property type="match status" value="1"/>
</dbReference>
<dbReference type="PANTHER" id="PTHR13847:SF280">
    <property type="entry name" value="D-AMINO ACID DEHYDROGENASE"/>
    <property type="match status" value="1"/>
</dbReference>
<dbReference type="PANTHER" id="PTHR13847">
    <property type="entry name" value="SARCOSINE DEHYDROGENASE-RELATED"/>
    <property type="match status" value="1"/>
</dbReference>
<dbReference type="Pfam" id="PF01266">
    <property type="entry name" value="DAO"/>
    <property type="match status" value="1"/>
</dbReference>
<dbReference type="SUPFAM" id="SSF54373">
    <property type="entry name" value="FAD-linked reductases, C-terminal domain"/>
    <property type="match status" value="1"/>
</dbReference>
<dbReference type="SUPFAM" id="SSF51905">
    <property type="entry name" value="FAD/NAD(P)-binding domain"/>
    <property type="match status" value="1"/>
</dbReference>
<evidence type="ECO:0000255" key="1">
    <source>
        <dbReference type="HAMAP-Rule" id="MF_01202"/>
    </source>
</evidence>
<protein>
    <recommendedName>
        <fullName evidence="1">D-amino acid dehydrogenase</fullName>
        <ecNumber evidence="1">1.4.99.-</ecNumber>
    </recommendedName>
</protein>
<gene>
    <name evidence="1" type="primary">dadA</name>
    <name type="ordered locus">PSEEN5416</name>
</gene>
<sequence>MRVLVLGSGVIGTASAYYLARQGFEVTVVDRQPAVAMETSFANAGQISPGYASPWAAPGVPLKAIKWLLERHAPLAIKLTGDVDQYLWMAQMLRNCTASRYAVNKERMVRLSEYSRDCLDELRAETGIAYESRSLGTTQLFRTQAQLDAAAKDIAVLEQSGVPYELLDRDGIARVEPALDSVKGILAGALRLPNDQTGDCQLFTTKLADMAIKLGVEFRFGQDIQRLDFAGDRINGVWIDGKLETADRYVLALGSYSPQMLKPLGIKAPVYPLKGYSLTVPITNGDMAPTSTILDETYKVAITRFDNRIRVGGMAEIAGFDLSLNPRRRETLEMIVNDLYPRGGDLSQASFWTGLRPATPDGTPIVGATAFRNLFLNTGHGTLGWTMACGSGRLLADLIARKKPQISAEGLDISRYGNSREVAKHGQSAPVHQQ</sequence>